<protein>
    <recommendedName>
        <fullName evidence="1">Small ribosomal subunit protein uS3</fullName>
    </recommendedName>
    <alternativeName>
        <fullName evidence="3">30S ribosomal protein S3</fullName>
    </alternativeName>
</protein>
<gene>
    <name evidence="1" type="primary">rpsC</name>
    <name type="ordered locus">TP_0195</name>
</gene>
<comment type="function">
    <text evidence="1">Binds the lower part of the 30S subunit head. Binds mRNA in the 70S ribosome, positioning it for translation.</text>
</comment>
<comment type="subunit">
    <text evidence="1">Part of the 30S ribosomal subunit. Forms a tight complex with proteins S10 and S14.</text>
</comment>
<comment type="similarity">
    <text evidence="1">Belongs to the universal ribosomal protein uS3 family.</text>
</comment>
<proteinExistence type="inferred from homology"/>
<reference key="1">
    <citation type="journal article" date="1998" name="Science">
        <title>Complete genome sequence of Treponema pallidum, the syphilis spirochete.</title>
        <authorList>
            <person name="Fraser C.M."/>
            <person name="Norris S.J."/>
            <person name="Weinstock G.M."/>
            <person name="White O."/>
            <person name="Sutton G.G."/>
            <person name="Dodson R.J."/>
            <person name="Gwinn M.L."/>
            <person name="Hickey E.K."/>
            <person name="Clayton R.A."/>
            <person name="Ketchum K.A."/>
            <person name="Sodergren E."/>
            <person name="Hardham J.M."/>
            <person name="McLeod M.P."/>
            <person name="Salzberg S.L."/>
            <person name="Peterson J.D."/>
            <person name="Khalak H.G."/>
            <person name="Richardson D.L."/>
            <person name="Howell J.K."/>
            <person name="Chidambaram M."/>
            <person name="Utterback T.R."/>
            <person name="McDonald L.A."/>
            <person name="Artiach P."/>
            <person name="Bowman C."/>
            <person name="Cotton M.D."/>
            <person name="Fujii C."/>
            <person name="Garland S.A."/>
            <person name="Hatch B."/>
            <person name="Horst K."/>
            <person name="Roberts K.M."/>
            <person name="Sandusky M."/>
            <person name="Weidman J.F."/>
            <person name="Smith H.O."/>
            <person name="Venter J.C."/>
        </authorList>
    </citation>
    <scope>NUCLEOTIDE SEQUENCE [LARGE SCALE GENOMIC DNA]</scope>
    <source>
        <strain>Nichols</strain>
    </source>
</reference>
<keyword id="KW-1185">Reference proteome</keyword>
<keyword id="KW-0687">Ribonucleoprotein</keyword>
<keyword id="KW-0689">Ribosomal protein</keyword>
<keyword id="KW-0694">RNA-binding</keyword>
<keyword id="KW-0699">rRNA-binding</keyword>
<organism>
    <name type="scientific">Treponema pallidum (strain Nichols)</name>
    <dbReference type="NCBI Taxonomy" id="243276"/>
    <lineage>
        <taxon>Bacteria</taxon>
        <taxon>Pseudomonadati</taxon>
        <taxon>Spirochaetota</taxon>
        <taxon>Spirochaetia</taxon>
        <taxon>Spirochaetales</taxon>
        <taxon>Treponemataceae</taxon>
        <taxon>Treponema</taxon>
    </lineage>
</organism>
<feature type="chain" id="PRO_0000130226" description="Small ribosomal subunit protein uS3">
    <location>
        <begin position="1"/>
        <end position="247"/>
    </location>
</feature>
<feature type="domain" description="KH type-2" evidence="1">
    <location>
        <begin position="39"/>
        <end position="109"/>
    </location>
</feature>
<feature type="region of interest" description="Disordered" evidence="2">
    <location>
        <begin position="224"/>
        <end position="247"/>
    </location>
</feature>
<feature type="compositionally biased region" description="Basic and acidic residues" evidence="2">
    <location>
        <begin position="227"/>
        <end position="247"/>
    </location>
</feature>
<dbReference type="EMBL" id="AE000520">
    <property type="protein sequence ID" value="AAC65180.1"/>
    <property type="molecule type" value="Genomic_DNA"/>
</dbReference>
<dbReference type="PIR" id="E71355">
    <property type="entry name" value="E71355"/>
</dbReference>
<dbReference type="RefSeq" id="WP_010881642.1">
    <property type="nucleotide sequence ID" value="NC_021490.2"/>
</dbReference>
<dbReference type="SMR" id="O83225"/>
<dbReference type="IntAct" id="O83225">
    <property type="interactions" value="3"/>
</dbReference>
<dbReference type="STRING" id="243276.TP_0195"/>
<dbReference type="EnsemblBacteria" id="AAC65180">
    <property type="protein sequence ID" value="AAC65180"/>
    <property type="gene ID" value="TP_0195"/>
</dbReference>
<dbReference type="GeneID" id="93875983"/>
<dbReference type="KEGG" id="tpa:TP_0195"/>
<dbReference type="KEGG" id="tpw:TPANIC_0195"/>
<dbReference type="eggNOG" id="COG0092">
    <property type="taxonomic scope" value="Bacteria"/>
</dbReference>
<dbReference type="HOGENOM" id="CLU_058591_0_2_12"/>
<dbReference type="OrthoDB" id="9806396at2"/>
<dbReference type="Proteomes" id="UP000000811">
    <property type="component" value="Chromosome"/>
</dbReference>
<dbReference type="GO" id="GO:0022627">
    <property type="term" value="C:cytosolic small ribosomal subunit"/>
    <property type="evidence" value="ECO:0007669"/>
    <property type="project" value="TreeGrafter"/>
</dbReference>
<dbReference type="GO" id="GO:0003729">
    <property type="term" value="F:mRNA binding"/>
    <property type="evidence" value="ECO:0007669"/>
    <property type="project" value="UniProtKB-UniRule"/>
</dbReference>
<dbReference type="GO" id="GO:0019843">
    <property type="term" value="F:rRNA binding"/>
    <property type="evidence" value="ECO:0007669"/>
    <property type="project" value="UniProtKB-UniRule"/>
</dbReference>
<dbReference type="GO" id="GO:0003735">
    <property type="term" value="F:structural constituent of ribosome"/>
    <property type="evidence" value="ECO:0007669"/>
    <property type="project" value="InterPro"/>
</dbReference>
<dbReference type="GO" id="GO:0006412">
    <property type="term" value="P:translation"/>
    <property type="evidence" value="ECO:0007669"/>
    <property type="project" value="UniProtKB-UniRule"/>
</dbReference>
<dbReference type="CDD" id="cd02412">
    <property type="entry name" value="KH-II_30S_S3"/>
    <property type="match status" value="1"/>
</dbReference>
<dbReference type="FunFam" id="3.30.300.20:FF:000001">
    <property type="entry name" value="30S ribosomal protein S3"/>
    <property type="match status" value="1"/>
</dbReference>
<dbReference type="Gene3D" id="3.30.300.20">
    <property type="match status" value="1"/>
</dbReference>
<dbReference type="Gene3D" id="3.30.1140.32">
    <property type="entry name" value="Ribosomal protein S3, C-terminal domain"/>
    <property type="match status" value="1"/>
</dbReference>
<dbReference type="HAMAP" id="MF_01309_B">
    <property type="entry name" value="Ribosomal_uS3_B"/>
    <property type="match status" value="1"/>
</dbReference>
<dbReference type="InterPro" id="IPR004087">
    <property type="entry name" value="KH_dom"/>
</dbReference>
<dbReference type="InterPro" id="IPR015946">
    <property type="entry name" value="KH_dom-like_a/b"/>
</dbReference>
<dbReference type="InterPro" id="IPR004044">
    <property type="entry name" value="KH_dom_type_2"/>
</dbReference>
<dbReference type="InterPro" id="IPR009019">
    <property type="entry name" value="KH_sf_prok-type"/>
</dbReference>
<dbReference type="InterPro" id="IPR036419">
    <property type="entry name" value="Ribosomal_S3_C_sf"/>
</dbReference>
<dbReference type="InterPro" id="IPR005704">
    <property type="entry name" value="Ribosomal_uS3_bac-typ"/>
</dbReference>
<dbReference type="InterPro" id="IPR001351">
    <property type="entry name" value="Ribosomal_uS3_C"/>
</dbReference>
<dbReference type="InterPro" id="IPR018280">
    <property type="entry name" value="Ribosomal_uS3_CS"/>
</dbReference>
<dbReference type="NCBIfam" id="TIGR01009">
    <property type="entry name" value="rpsC_bact"/>
    <property type="match status" value="1"/>
</dbReference>
<dbReference type="PANTHER" id="PTHR11760">
    <property type="entry name" value="30S/40S RIBOSOMAL PROTEIN S3"/>
    <property type="match status" value="1"/>
</dbReference>
<dbReference type="PANTHER" id="PTHR11760:SF19">
    <property type="entry name" value="SMALL RIBOSOMAL SUBUNIT PROTEIN US3C"/>
    <property type="match status" value="1"/>
</dbReference>
<dbReference type="Pfam" id="PF07650">
    <property type="entry name" value="KH_2"/>
    <property type="match status" value="1"/>
</dbReference>
<dbReference type="Pfam" id="PF00189">
    <property type="entry name" value="Ribosomal_S3_C"/>
    <property type="match status" value="1"/>
</dbReference>
<dbReference type="SMART" id="SM00322">
    <property type="entry name" value="KH"/>
    <property type="match status" value="1"/>
</dbReference>
<dbReference type="SUPFAM" id="SSF54814">
    <property type="entry name" value="Prokaryotic type KH domain (KH-domain type II)"/>
    <property type="match status" value="1"/>
</dbReference>
<dbReference type="SUPFAM" id="SSF54821">
    <property type="entry name" value="Ribosomal protein S3 C-terminal domain"/>
    <property type="match status" value="1"/>
</dbReference>
<dbReference type="PROSITE" id="PS50823">
    <property type="entry name" value="KH_TYPE_2"/>
    <property type="match status" value="1"/>
</dbReference>
<dbReference type="PROSITE" id="PS00548">
    <property type="entry name" value="RIBOSOMAL_S3"/>
    <property type="match status" value="1"/>
</dbReference>
<name>RS3_TREPA</name>
<evidence type="ECO:0000255" key="1">
    <source>
        <dbReference type="HAMAP-Rule" id="MF_01309"/>
    </source>
</evidence>
<evidence type="ECO:0000256" key="2">
    <source>
        <dbReference type="SAM" id="MobiDB-lite"/>
    </source>
</evidence>
<evidence type="ECO:0000305" key="3"/>
<accession>O83225</accession>
<sequence length="247" mass="27772">MGQKVSPIGLRLGINKVWSSRWYAGPREYAALLHEDLRIRSMIRSFPECKNADIAEVEIVRHPQRVTVVMHTARPGVVIGAKGVNIEKIGAEVQKRLNKKVQIKVKEIKRMELNAYLVAQNVARQLTARVSFRKCLRQACAGTMKSGAQGVKIRVSGRLGGAEMSRTEEIKEGRTPLHTLRADIDYGFAEAHTTYGSIGVKVWLYSGMMYGNECRKDVGSLLRRSRRESGQKSDELVRDERTHAERG</sequence>